<reference key="1">
    <citation type="journal article" date="2005" name="J. Bacteriol.">
        <title>Whole-genome sequencing of Staphylococcus haemolyticus uncovers the extreme plasticity of its genome and the evolution of human-colonizing staphylococcal species.</title>
        <authorList>
            <person name="Takeuchi F."/>
            <person name="Watanabe S."/>
            <person name="Baba T."/>
            <person name="Yuzawa H."/>
            <person name="Ito T."/>
            <person name="Morimoto Y."/>
            <person name="Kuroda M."/>
            <person name="Cui L."/>
            <person name="Takahashi M."/>
            <person name="Ankai A."/>
            <person name="Baba S."/>
            <person name="Fukui S."/>
            <person name="Lee J.C."/>
            <person name="Hiramatsu K."/>
        </authorList>
    </citation>
    <scope>NUCLEOTIDE SEQUENCE [LARGE SCALE GENOMIC DNA]</scope>
    <source>
        <strain>JCSC1435</strain>
    </source>
</reference>
<feature type="chain" id="PRO_1000016528" description="Protein NrdI">
    <location>
        <begin position="1"/>
        <end position="132"/>
    </location>
</feature>
<evidence type="ECO:0000255" key="1">
    <source>
        <dbReference type="HAMAP-Rule" id="MF_00128"/>
    </source>
</evidence>
<sequence length="132" mass="15254">MKVVYFSFSGNVRRFIKRSEISDVMEITKDNCTDPFEEPYILVTGTIGFGEVPKEVQSFLEINHHNLRAVAASGNRNWGQNFAKAGRTISEEYHVPLLMKFEVQGSNKDVIEFKNKVGHFNENYEREKVQSY</sequence>
<gene>
    <name evidence="1" type="primary">nrdI</name>
    <name type="ordered locus">SH2163</name>
</gene>
<comment type="function">
    <text evidence="1">Probably involved in ribonucleotide reductase function.</text>
</comment>
<comment type="similarity">
    <text evidence="1">Belongs to the NrdI family.</text>
</comment>
<name>NRDI_STAHJ</name>
<accession>Q4L4F3</accession>
<proteinExistence type="inferred from homology"/>
<organism>
    <name type="scientific">Staphylococcus haemolyticus (strain JCSC1435)</name>
    <dbReference type="NCBI Taxonomy" id="279808"/>
    <lineage>
        <taxon>Bacteria</taxon>
        <taxon>Bacillati</taxon>
        <taxon>Bacillota</taxon>
        <taxon>Bacilli</taxon>
        <taxon>Bacillales</taxon>
        <taxon>Staphylococcaceae</taxon>
        <taxon>Staphylococcus</taxon>
    </lineage>
</organism>
<dbReference type="EMBL" id="AP006716">
    <property type="protein sequence ID" value="BAE05472.1"/>
    <property type="molecule type" value="Genomic_DNA"/>
</dbReference>
<dbReference type="RefSeq" id="WP_011276425.1">
    <property type="nucleotide sequence ID" value="NC_007168.1"/>
</dbReference>
<dbReference type="SMR" id="Q4L4F3"/>
<dbReference type="GeneID" id="93781484"/>
<dbReference type="KEGG" id="sha:SH2163"/>
<dbReference type="eggNOG" id="COG1780">
    <property type="taxonomic scope" value="Bacteria"/>
</dbReference>
<dbReference type="HOGENOM" id="CLU_114845_3_0_9"/>
<dbReference type="OrthoDB" id="350535at2"/>
<dbReference type="Proteomes" id="UP000000543">
    <property type="component" value="Chromosome"/>
</dbReference>
<dbReference type="GO" id="GO:0010181">
    <property type="term" value="F:FMN binding"/>
    <property type="evidence" value="ECO:0007669"/>
    <property type="project" value="InterPro"/>
</dbReference>
<dbReference type="GO" id="GO:0036211">
    <property type="term" value="P:protein modification process"/>
    <property type="evidence" value="ECO:0007669"/>
    <property type="project" value="InterPro"/>
</dbReference>
<dbReference type="Gene3D" id="3.40.50.360">
    <property type="match status" value="1"/>
</dbReference>
<dbReference type="HAMAP" id="MF_00128">
    <property type="entry name" value="NrdI"/>
    <property type="match status" value="1"/>
</dbReference>
<dbReference type="InterPro" id="IPR029039">
    <property type="entry name" value="Flavoprotein-like_sf"/>
</dbReference>
<dbReference type="InterPro" id="IPR020852">
    <property type="entry name" value="RNR_Ib_NrdI_bac"/>
</dbReference>
<dbReference type="InterPro" id="IPR004465">
    <property type="entry name" value="RNR_NrdI"/>
</dbReference>
<dbReference type="NCBIfam" id="TIGR00333">
    <property type="entry name" value="nrdI"/>
    <property type="match status" value="1"/>
</dbReference>
<dbReference type="PANTHER" id="PTHR37297">
    <property type="entry name" value="PROTEIN NRDI"/>
    <property type="match status" value="1"/>
</dbReference>
<dbReference type="PANTHER" id="PTHR37297:SF1">
    <property type="entry name" value="PROTEIN NRDI"/>
    <property type="match status" value="1"/>
</dbReference>
<dbReference type="Pfam" id="PF07972">
    <property type="entry name" value="Flavodoxin_NdrI"/>
    <property type="match status" value="1"/>
</dbReference>
<dbReference type="PIRSF" id="PIRSF005087">
    <property type="entry name" value="NrdI"/>
    <property type="match status" value="1"/>
</dbReference>
<dbReference type="SUPFAM" id="SSF52218">
    <property type="entry name" value="Flavoproteins"/>
    <property type="match status" value="1"/>
</dbReference>
<protein>
    <recommendedName>
        <fullName evidence="1">Protein NrdI</fullName>
    </recommendedName>
</protein>